<accession>Q8Z0Q9</accession>
<organism>
    <name type="scientific">Nostoc sp. (strain PCC 7120 / SAG 25.82 / UTEX 2576)</name>
    <dbReference type="NCBI Taxonomy" id="103690"/>
    <lineage>
        <taxon>Bacteria</taxon>
        <taxon>Bacillati</taxon>
        <taxon>Cyanobacteriota</taxon>
        <taxon>Cyanophyceae</taxon>
        <taxon>Nostocales</taxon>
        <taxon>Nostocaceae</taxon>
        <taxon>Nostoc</taxon>
    </lineage>
</organism>
<gene>
    <name type="primary">glgA2</name>
    <name type="ordered locus">alr0031</name>
</gene>
<feature type="chain" id="PRO_0000188588" description="Probable glycogen synthase 2">
    <location>
        <begin position="1"/>
        <end position="492"/>
    </location>
</feature>
<feature type="binding site" evidence="1">
    <location>
        <position position="15"/>
    </location>
    <ligand>
        <name>ADP-alpha-D-glucose</name>
        <dbReference type="ChEBI" id="CHEBI:57498"/>
    </ligand>
</feature>
<reference key="1">
    <citation type="journal article" date="2001" name="DNA Res.">
        <title>Complete genomic sequence of the filamentous nitrogen-fixing cyanobacterium Anabaena sp. strain PCC 7120.</title>
        <authorList>
            <person name="Kaneko T."/>
            <person name="Nakamura Y."/>
            <person name="Wolk C.P."/>
            <person name="Kuritz T."/>
            <person name="Sasamoto S."/>
            <person name="Watanabe A."/>
            <person name="Iriguchi M."/>
            <person name="Ishikawa A."/>
            <person name="Kawashima K."/>
            <person name="Kimura T."/>
            <person name="Kishida Y."/>
            <person name="Kohara M."/>
            <person name="Matsumoto M."/>
            <person name="Matsuno A."/>
            <person name="Muraki A."/>
            <person name="Nakazaki N."/>
            <person name="Shimpo S."/>
            <person name="Sugimoto M."/>
            <person name="Takazawa M."/>
            <person name="Yamada M."/>
            <person name="Yasuda M."/>
            <person name="Tabata S."/>
        </authorList>
    </citation>
    <scope>NUCLEOTIDE SEQUENCE [LARGE SCALE GENOMIC DNA]</scope>
    <source>
        <strain>PCC 7120 / SAG 25.82 / UTEX 2576</strain>
    </source>
</reference>
<proteinExistence type="inferred from homology"/>
<keyword id="KW-0320">Glycogen biosynthesis</keyword>
<keyword id="KW-0328">Glycosyltransferase</keyword>
<keyword id="KW-1185">Reference proteome</keyword>
<keyword id="KW-0808">Transferase</keyword>
<comment type="function">
    <text evidence="1">Synthesizes alpha-1,4-glucan chains using ADP-glucose.</text>
</comment>
<comment type="catalytic activity">
    <reaction>
        <text>[(1-&gt;4)-alpha-D-glucosyl](n) + ADP-alpha-D-glucose = [(1-&gt;4)-alpha-D-glucosyl](n+1) + ADP + H(+)</text>
        <dbReference type="Rhea" id="RHEA:18189"/>
        <dbReference type="Rhea" id="RHEA-COMP:9584"/>
        <dbReference type="Rhea" id="RHEA-COMP:9587"/>
        <dbReference type="ChEBI" id="CHEBI:15378"/>
        <dbReference type="ChEBI" id="CHEBI:15444"/>
        <dbReference type="ChEBI" id="CHEBI:57498"/>
        <dbReference type="ChEBI" id="CHEBI:456216"/>
        <dbReference type="EC" id="2.4.1.21"/>
    </reaction>
</comment>
<comment type="pathway">
    <text>Glycan biosynthesis; glycogen biosynthesis.</text>
</comment>
<comment type="similarity">
    <text evidence="2">Belongs to the glycosyltransferase 1 family. Bacterial/plant glycogen synthase subfamily.</text>
</comment>
<evidence type="ECO:0000250" key="1"/>
<evidence type="ECO:0000305" key="2"/>
<protein>
    <recommendedName>
        <fullName>Probable glycogen synthase 2</fullName>
        <ecNumber>2.4.1.21</ecNumber>
    </recommendedName>
    <alternativeName>
        <fullName>Starch [bacterial glycogen] synthase 2</fullName>
    </alternativeName>
</protein>
<sequence length="492" mass="56729">MYIVQIASECAPVIKAGGLGDVVYGLSRELEIRGNCVELILPKYDCMRYDHVWGLHEAYLNLWVPWFGAAIHCTVYCGWVHGRVCFFIEPHSEDNFFNRGCYYGCDDDDMRFAFFSKAALEFLHQSNKRPDIIHCHDWQTGLIPVMLYEIYKYHGMDTQRVCYTIHNFKHQGIGGVKTLWATGLNREAYYFQDDKLRDDHNPFALNYMKGGIVYSNAVTTVSPNHALEAQYTDVGCGLGHTLYLHKEKFSGVLNGIDYDFWNPEIDRHIPDNYSQDDFEQKLYNKKALRERLLLQAADKPIIAYIGRLDNQKGVHLVHHAIYHALNKGAQFVLLGSATEAGINAHFRHEKQFLNSNPDVHLELGFNEELSHLIYAGADMIVVPSNYEPCGLTQMIGLKYGTVPIVRGVGGLVNTVFDRDYDQNLPPEKRNGYVFYQSDNQALESAMNRAIDLWYQSPEQFQQLAIQGMKYDYSWNNPGTEYLNIYEWIKYKW</sequence>
<dbReference type="EC" id="2.4.1.21"/>
<dbReference type="EMBL" id="BA000019">
    <property type="protein sequence ID" value="BAB77555.1"/>
    <property type="molecule type" value="Genomic_DNA"/>
</dbReference>
<dbReference type="PIR" id="AG1810">
    <property type="entry name" value="AG1810"/>
</dbReference>
<dbReference type="SMR" id="Q8Z0Q9"/>
<dbReference type="STRING" id="103690.gene:10492035"/>
<dbReference type="CAZy" id="GT5">
    <property type="family name" value="Glycosyltransferase Family 5"/>
</dbReference>
<dbReference type="KEGG" id="ana:alr0031"/>
<dbReference type="eggNOG" id="COG0297">
    <property type="taxonomic scope" value="Bacteria"/>
</dbReference>
<dbReference type="OrthoDB" id="9808590at2"/>
<dbReference type="UniPathway" id="UPA00164"/>
<dbReference type="Proteomes" id="UP000002483">
    <property type="component" value="Chromosome"/>
</dbReference>
<dbReference type="GO" id="GO:0009011">
    <property type="term" value="F:alpha-1,4-glucan glucosyltransferase (ADP-glucose donor) activity"/>
    <property type="evidence" value="ECO:0007669"/>
    <property type="project" value="UniProtKB-UniRule"/>
</dbReference>
<dbReference type="GO" id="GO:0004373">
    <property type="term" value="F:alpha-1,4-glucan glucosyltransferase (UDP-glucose donor) activity"/>
    <property type="evidence" value="ECO:0007669"/>
    <property type="project" value="InterPro"/>
</dbReference>
<dbReference type="GO" id="GO:0005978">
    <property type="term" value="P:glycogen biosynthetic process"/>
    <property type="evidence" value="ECO:0007669"/>
    <property type="project" value="UniProtKB-UniRule"/>
</dbReference>
<dbReference type="CDD" id="cd03791">
    <property type="entry name" value="GT5_Glycogen_synthase_DULL1-like"/>
    <property type="match status" value="1"/>
</dbReference>
<dbReference type="Gene3D" id="3.40.50.2000">
    <property type="entry name" value="Glycogen Phosphorylase B"/>
    <property type="match status" value="2"/>
</dbReference>
<dbReference type="HAMAP" id="MF_00484">
    <property type="entry name" value="Glycogen_synth"/>
    <property type="match status" value="1"/>
</dbReference>
<dbReference type="InterPro" id="IPR001296">
    <property type="entry name" value="Glyco_trans_1"/>
</dbReference>
<dbReference type="InterPro" id="IPR011835">
    <property type="entry name" value="GS/SS"/>
</dbReference>
<dbReference type="InterPro" id="IPR013534">
    <property type="entry name" value="Starch_synth_cat_dom"/>
</dbReference>
<dbReference type="NCBIfam" id="TIGR02095">
    <property type="entry name" value="glgA"/>
    <property type="match status" value="1"/>
</dbReference>
<dbReference type="NCBIfam" id="NF001902">
    <property type="entry name" value="PRK00654.2-1"/>
    <property type="match status" value="1"/>
</dbReference>
<dbReference type="NCBIfam" id="NF001905">
    <property type="entry name" value="PRK00654.2-4"/>
    <property type="match status" value="1"/>
</dbReference>
<dbReference type="PANTHER" id="PTHR46083">
    <property type="match status" value="1"/>
</dbReference>
<dbReference type="PANTHER" id="PTHR46083:SF1">
    <property type="entry name" value="GLYCOGEN SYNTHASE 2-RELATED"/>
    <property type="match status" value="1"/>
</dbReference>
<dbReference type="Pfam" id="PF08323">
    <property type="entry name" value="Glyco_transf_5"/>
    <property type="match status" value="1"/>
</dbReference>
<dbReference type="Pfam" id="PF00534">
    <property type="entry name" value="Glycos_transf_1"/>
    <property type="match status" value="1"/>
</dbReference>
<dbReference type="SUPFAM" id="SSF53756">
    <property type="entry name" value="UDP-Glycosyltransferase/glycogen phosphorylase"/>
    <property type="match status" value="1"/>
</dbReference>
<name>GLGA2_NOSS1</name>